<name>Y367_PYRAB</name>
<dbReference type="EMBL" id="AJ248284">
    <property type="protein sequence ID" value="CAB49289.1"/>
    <property type="molecule type" value="Genomic_DNA"/>
</dbReference>
<dbReference type="EMBL" id="HE613800">
    <property type="protein sequence ID" value="CCE69744.1"/>
    <property type="molecule type" value="Genomic_DNA"/>
</dbReference>
<dbReference type="PIR" id="B75151">
    <property type="entry name" value="B75151"/>
</dbReference>
<dbReference type="RefSeq" id="WP_010867489.1">
    <property type="nucleotide sequence ID" value="NC_000868.1"/>
</dbReference>
<dbReference type="SMR" id="Q9V1R0"/>
<dbReference type="STRING" id="272844.PAB2104"/>
<dbReference type="KEGG" id="pab:PAB2104"/>
<dbReference type="PATRIC" id="fig|272844.11.peg.388"/>
<dbReference type="eggNOG" id="arCOG04152">
    <property type="taxonomic scope" value="Archaea"/>
</dbReference>
<dbReference type="HOGENOM" id="CLU_075726_0_0_2"/>
<dbReference type="OrthoDB" id="31424at2157"/>
<dbReference type="PhylomeDB" id="Q9V1R0"/>
<dbReference type="Proteomes" id="UP000000810">
    <property type="component" value="Chromosome"/>
</dbReference>
<dbReference type="Proteomes" id="UP000009139">
    <property type="component" value="Chromosome"/>
</dbReference>
<dbReference type="GO" id="GO:0003677">
    <property type="term" value="F:DNA binding"/>
    <property type="evidence" value="ECO:0007669"/>
    <property type="project" value="UniProtKB-KW"/>
</dbReference>
<dbReference type="GO" id="GO:0003700">
    <property type="term" value="F:DNA-binding transcription factor activity"/>
    <property type="evidence" value="ECO:0007669"/>
    <property type="project" value="UniProtKB-UniRule"/>
</dbReference>
<dbReference type="CDD" id="cd00093">
    <property type="entry name" value="HTH_XRE"/>
    <property type="match status" value="1"/>
</dbReference>
<dbReference type="Gene3D" id="1.10.260.40">
    <property type="entry name" value="lambda repressor-like DNA-binding domains"/>
    <property type="match status" value="1"/>
</dbReference>
<dbReference type="HAMAP" id="MF_00584">
    <property type="entry name" value="HTH_type_cro_C1"/>
    <property type="match status" value="1"/>
</dbReference>
<dbReference type="InterPro" id="IPR020886">
    <property type="entry name" value="Arc_TR_HTH"/>
</dbReference>
<dbReference type="InterPro" id="IPR001387">
    <property type="entry name" value="Cro/C1-type_HTH"/>
</dbReference>
<dbReference type="InterPro" id="IPR010982">
    <property type="entry name" value="Lambda_DNA-bd_dom_sf"/>
</dbReference>
<dbReference type="NCBIfam" id="NF003162">
    <property type="entry name" value="PRK04140.1"/>
    <property type="match status" value="1"/>
</dbReference>
<dbReference type="PANTHER" id="PTHR46558:SF4">
    <property type="entry name" value="DNA-BIDING PHAGE PROTEIN"/>
    <property type="match status" value="1"/>
</dbReference>
<dbReference type="PANTHER" id="PTHR46558">
    <property type="entry name" value="TRACRIPTIONAL REGULATORY PROTEIN-RELATED-RELATED"/>
    <property type="match status" value="1"/>
</dbReference>
<dbReference type="Pfam" id="PF01381">
    <property type="entry name" value="HTH_3"/>
    <property type="match status" value="1"/>
</dbReference>
<dbReference type="SMART" id="SM00530">
    <property type="entry name" value="HTH_XRE"/>
    <property type="match status" value="1"/>
</dbReference>
<dbReference type="SUPFAM" id="SSF47413">
    <property type="entry name" value="lambda repressor-like DNA-binding domains"/>
    <property type="match status" value="1"/>
</dbReference>
<dbReference type="PROSITE" id="PS50943">
    <property type="entry name" value="HTH_CROC1"/>
    <property type="match status" value="1"/>
</dbReference>
<sequence>MEREEFVEFVERILRRIGFKTLKLNFRGGCFNLVATRSLLLLFIKALANIDKFSEEQAEDLKRLAKLFKASPILVGLRTKNYEMEDGIVYERFGIYAVTPGTLYSMFAEGEPPLIMAERGGFYVRIDGKRLKDLREKHGYSLSELANILGVSRKSLQRYEKGDSMVTLEVALRLEEVFDEALVKPINVLKAKFDEISLSSKPETTLEREVFERLERIGMEVVKVKTAPFNAITTEEEDNIELLTGIDEKKTEKTLRRAELVSQMAEIVGSEGMFVLKRARIEVVNKVPILPTRVLEEVRDADELLEIINELKEAKS</sequence>
<protein>
    <recommendedName>
        <fullName evidence="1">Putative HTH-type transcriptional regulatory protein PYRAB03670</fullName>
    </recommendedName>
</protein>
<keyword id="KW-0238">DNA-binding</keyword>
<keyword id="KW-0804">Transcription</keyword>
<keyword id="KW-0805">Transcription regulation</keyword>
<proteinExistence type="inferred from homology"/>
<reference key="1">
    <citation type="journal article" date="2003" name="Mol. Microbiol.">
        <title>An integrated analysis of the genome of the hyperthermophilic archaeon Pyrococcus abyssi.</title>
        <authorList>
            <person name="Cohen G.N."/>
            <person name="Barbe V."/>
            <person name="Flament D."/>
            <person name="Galperin M."/>
            <person name="Heilig R."/>
            <person name="Lecompte O."/>
            <person name="Poch O."/>
            <person name="Prieur D."/>
            <person name="Querellou J."/>
            <person name="Ripp R."/>
            <person name="Thierry J.-C."/>
            <person name="Van der Oost J."/>
            <person name="Weissenbach J."/>
            <person name="Zivanovic Y."/>
            <person name="Forterre P."/>
        </authorList>
    </citation>
    <scope>NUCLEOTIDE SEQUENCE [LARGE SCALE GENOMIC DNA]</scope>
    <source>
        <strain>GE5 / Orsay</strain>
    </source>
</reference>
<reference key="2">
    <citation type="journal article" date="2012" name="Curr. Microbiol.">
        <title>Re-annotation of two hyperthermophilic archaea Pyrococcus abyssi GE5 and Pyrococcus furiosus DSM 3638.</title>
        <authorList>
            <person name="Gao J."/>
            <person name="Wang J."/>
        </authorList>
    </citation>
    <scope>GENOME REANNOTATION</scope>
    <source>
        <strain>GE5 / Orsay</strain>
    </source>
</reference>
<feature type="chain" id="PRO_0000144860" description="Putative HTH-type transcriptional regulatory protein PYRAB03670">
    <location>
        <begin position="1"/>
        <end position="316"/>
    </location>
</feature>
<feature type="domain" description="HTH cro/C1-type" evidence="1">
    <location>
        <begin position="131"/>
        <end position="189"/>
    </location>
</feature>
<feature type="DNA-binding region" description="H-T-H motif" evidence="1">
    <location>
        <begin position="142"/>
        <end position="161"/>
    </location>
</feature>
<accession>Q9V1R0</accession>
<accession>G8ZI01</accession>
<gene>
    <name type="ordered locus">PYRAB03670</name>
    <name type="ORF">PAB2104</name>
</gene>
<organism>
    <name type="scientific">Pyrococcus abyssi (strain GE5 / Orsay)</name>
    <dbReference type="NCBI Taxonomy" id="272844"/>
    <lineage>
        <taxon>Archaea</taxon>
        <taxon>Methanobacteriati</taxon>
        <taxon>Methanobacteriota</taxon>
        <taxon>Thermococci</taxon>
        <taxon>Thermococcales</taxon>
        <taxon>Thermococcaceae</taxon>
        <taxon>Pyrococcus</taxon>
    </lineage>
</organism>
<evidence type="ECO:0000255" key="1">
    <source>
        <dbReference type="HAMAP-Rule" id="MF_00584"/>
    </source>
</evidence>